<organism>
    <name type="scientific">Arabidopsis thaliana</name>
    <name type="common">Mouse-ear cress</name>
    <dbReference type="NCBI Taxonomy" id="3702"/>
    <lineage>
        <taxon>Eukaryota</taxon>
        <taxon>Viridiplantae</taxon>
        <taxon>Streptophyta</taxon>
        <taxon>Embryophyta</taxon>
        <taxon>Tracheophyta</taxon>
        <taxon>Spermatophyta</taxon>
        <taxon>Magnoliopsida</taxon>
        <taxon>eudicotyledons</taxon>
        <taxon>Gunneridae</taxon>
        <taxon>Pentapetalae</taxon>
        <taxon>rosids</taxon>
        <taxon>malvids</taxon>
        <taxon>Brassicales</taxon>
        <taxon>Brassicaceae</taxon>
        <taxon>Camelineae</taxon>
        <taxon>Arabidopsis</taxon>
    </lineage>
</organism>
<feature type="chain" id="PRO_0000283434" description="Putative F-box protein At3g19560">
    <location>
        <begin position="1"/>
        <end position="361"/>
    </location>
</feature>
<feature type="domain" description="F-box" evidence="1">
    <location>
        <begin position="3"/>
        <end position="49"/>
    </location>
</feature>
<reference key="1">
    <citation type="journal article" date="2000" name="DNA Res.">
        <title>Structural analysis of Arabidopsis thaliana chromosome 3. II. Sequence features of the 4,251,695 bp regions covered by 90 P1, TAC and BAC clones.</title>
        <authorList>
            <person name="Kaneko T."/>
            <person name="Katoh T."/>
            <person name="Sato S."/>
            <person name="Nakamura Y."/>
            <person name="Asamizu E."/>
            <person name="Tabata S."/>
        </authorList>
    </citation>
    <scope>NUCLEOTIDE SEQUENCE [LARGE SCALE GENOMIC DNA]</scope>
    <source>
        <strain>cv. Columbia</strain>
    </source>
</reference>
<reference key="2">
    <citation type="journal article" date="2017" name="Plant J.">
        <title>Araport11: a complete reannotation of the Arabidopsis thaliana reference genome.</title>
        <authorList>
            <person name="Cheng C.Y."/>
            <person name="Krishnakumar V."/>
            <person name="Chan A.P."/>
            <person name="Thibaud-Nissen F."/>
            <person name="Schobel S."/>
            <person name="Town C.D."/>
        </authorList>
    </citation>
    <scope>GENOME REANNOTATION</scope>
    <source>
        <strain>cv. Columbia</strain>
    </source>
</reference>
<name>FB164_ARATH</name>
<dbReference type="EMBL" id="AP000417">
    <property type="protein sequence ID" value="BAB02540.1"/>
    <property type="status" value="ALT_INIT"/>
    <property type="molecule type" value="Genomic_DNA"/>
</dbReference>
<dbReference type="EMBL" id="CP002686">
    <property type="protein sequence ID" value="AEE76258.1"/>
    <property type="molecule type" value="Genomic_DNA"/>
</dbReference>
<dbReference type="PIR" id="T52383">
    <property type="entry name" value="T52383"/>
</dbReference>
<dbReference type="RefSeq" id="NP_188590.2">
    <property type="nucleotide sequence ID" value="NM_112846.2"/>
</dbReference>
<dbReference type="BioGRID" id="6826">
    <property type="interactions" value="9"/>
</dbReference>
<dbReference type="PaxDb" id="3702-AT3G19560.1"/>
<dbReference type="EnsemblPlants" id="AT3G19560.1">
    <property type="protein sequence ID" value="AT3G19560.1"/>
    <property type="gene ID" value="AT3G19560"/>
</dbReference>
<dbReference type="GeneID" id="821493"/>
<dbReference type="Gramene" id="AT3G19560.1">
    <property type="protein sequence ID" value="AT3G19560.1"/>
    <property type="gene ID" value="AT3G19560"/>
</dbReference>
<dbReference type="KEGG" id="ath:AT3G19560"/>
<dbReference type="Araport" id="AT3G19560"/>
<dbReference type="TAIR" id="AT3G19560"/>
<dbReference type="HOGENOM" id="CLU_034692_0_0_1"/>
<dbReference type="InParanoid" id="Q9LJP0"/>
<dbReference type="OMA" id="TKIWITT"/>
<dbReference type="PRO" id="PR:Q9LJP0"/>
<dbReference type="Proteomes" id="UP000006548">
    <property type="component" value="Chromosome 3"/>
</dbReference>
<dbReference type="ExpressionAtlas" id="Q9LJP0">
    <property type="expression patterns" value="differential"/>
</dbReference>
<dbReference type="CDD" id="cd22157">
    <property type="entry name" value="F-box_AtFBW1-like"/>
    <property type="match status" value="1"/>
</dbReference>
<dbReference type="Gene3D" id="1.20.1280.50">
    <property type="match status" value="1"/>
</dbReference>
<dbReference type="InterPro" id="IPR006527">
    <property type="entry name" value="F-box-assoc_dom_typ1"/>
</dbReference>
<dbReference type="InterPro" id="IPR017451">
    <property type="entry name" value="F-box-assoc_interact_dom"/>
</dbReference>
<dbReference type="InterPro" id="IPR036047">
    <property type="entry name" value="F-box-like_dom_sf"/>
</dbReference>
<dbReference type="InterPro" id="IPR001810">
    <property type="entry name" value="F-box_dom"/>
</dbReference>
<dbReference type="InterPro" id="IPR050796">
    <property type="entry name" value="SCF_F-box_component"/>
</dbReference>
<dbReference type="NCBIfam" id="TIGR01640">
    <property type="entry name" value="F_box_assoc_1"/>
    <property type="match status" value="1"/>
</dbReference>
<dbReference type="PANTHER" id="PTHR31672">
    <property type="entry name" value="BNACNNG10540D PROTEIN"/>
    <property type="match status" value="1"/>
</dbReference>
<dbReference type="PANTHER" id="PTHR31672:SF13">
    <property type="entry name" value="F-BOX PROTEIN CPR30-LIKE"/>
    <property type="match status" value="1"/>
</dbReference>
<dbReference type="Pfam" id="PF00646">
    <property type="entry name" value="F-box"/>
    <property type="match status" value="1"/>
</dbReference>
<dbReference type="Pfam" id="PF07734">
    <property type="entry name" value="FBA_1"/>
    <property type="match status" value="1"/>
</dbReference>
<dbReference type="SMART" id="SM00256">
    <property type="entry name" value="FBOX"/>
    <property type="match status" value="1"/>
</dbReference>
<dbReference type="SUPFAM" id="SSF81383">
    <property type="entry name" value="F-box domain"/>
    <property type="match status" value="1"/>
</dbReference>
<dbReference type="PROSITE" id="PS50181">
    <property type="entry name" value="FBOX"/>
    <property type="match status" value="1"/>
</dbReference>
<evidence type="ECO:0000255" key="1">
    <source>
        <dbReference type="PROSITE-ProRule" id="PRU00080"/>
    </source>
</evidence>
<evidence type="ECO:0000305" key="2"/>
<comment type="sequence caution" evidence="2">
    <conflict type="erroneous initiation">
        <sequence resource="EMBL-CDS" id="BAB02540"/>
    </conflict>
    <text>Truncated N-terminus.</text>
</comment>
<keyword id="KW-1185">Reference proteome</keyword>
<proteinExistence type="predicted"/>
<sequence>MCMTMMSDISQDLLEEILSRVPITSLRAVKSTCKRWKDLLNDPSFSKKYGGKRDNEFLAIMTSGSRASLMSVNLHGPRDNKDLEDPFIKQIGELNQDQIFKVFHCDGLLLCITNEDNTRLVVWNPYLAQTRCIQPIDKFYIYDWYCLGYDKDKNHKILVVYSPMFGRIEYEIYSFLSKSWIVLSFPTDWQISRDECLSLKGNTYFIAYKKMEVEEVGFQEFLLCFDFTNERFGPLLPLPFQCYNQTSLVLSTVQEEQLAVLCKRCDAYETKIWITTKIEPNAVSWSYFLKFDFKVDISGGSFFVDVEEKVAVLFCINREKEKGINNKTYMIGEDGYYKEVDLGESNWCPSMCSYVPSCVQV</sequence>
<accession>Q9LJP0</accession>
<protein>
    <recommendedName>
        <fullName>Putative F-box protein At3g19560</fullName>
    </recommendedName>
</protein>
<gene>
    <name type="ordered locus">At3g19560</name>
    <name type="ORF">MMB12.1</name>
</gene>